<protein>
    <recommendedName>
        <fullName evidence="1 4">Phosphoenolpyruvate carboxykinase [GTP]</fullName>
        <shortName evidence="1 4">PEP carboxykinase</shortName>
        <shortName evidence="1 4">PEPCK</shortName>
        <ecNumber evidence="1">4.1.1.32</ecNumber>
    </recommendedName>
    <alternativeName>
        <fullName evidence="1">GTP-dependent phosphoenolpyruvate carboxykinase</fullName>
        <shortName evidence="1">GTP-PEPCK</shortName>
    </alternativeName>
</protein>
<name>PCKG_MYCTU</name>
<accession>P9WIH3</accession>
<accession>L0T2U6</accession>
<accession>P65686</accession>
<accession>P96393</accession>
<sequence length="606" mass="67253">MTSATIPGLDTAPTNHQGLLSWVEEVAELTQPDRVVFTDGSEEEFQRLCDQLVEAGTFIRLNPEKHKNSYLALSDPSDVARVESRTYICSAKEIDAGPTNNWMDPGEMRSIMKDLYRGCMRGRTMYVVPFCMGPLGAEDPKLGVEITDSEYVVVSMRTMTRMGKAALEKMGDDGFFVKALHSVGAPLEPGQKDVAWPCSETKYITHFPETREIWSYGSGYGGNALLGKKCYSLRIASAMAHDEGWLAEHMLILKLISPENKAYYFAAAFPSACGKTNLAMLQPTIPGWRAETLGDDIAWMRFGKDGRLYAVNPEFGFFGVAPGTNWKSNPNAMRTIAAGNTVFTNVALTDDGDVWWEGLEGDPQHLIDWKGNDWYFRETETNAAHPNSRYCTPMSQCPILAPEWDDPQGVPISGILFGGRRKTTVPLVTEARDWQHGVFIGATLGSEQTAAAEGKVGNVRRDPMAMLPFLGYNVGDYFQHWINLGKHADESKLPKVFFVNWFRRGDDGRFLWPGFGENSRVLKWIVDRIEHKAGGATTPIGTVPAVEDLDLDGLDVDAADVAAALAVDADEWRQELPLIEEWLQFVGEKLPTGVKDEFDALKERLG</sequence>
<reference key="1">
    <citation type="journal article" date="1998" name="Nature">
        <title>Deciphering the biology of Mycobacterium tuberculosis from the complete genome sequence.</title>
        <authorList>
            <person name="Cole S.T."/>
            <person name="Brosch R."/>
            <person name="Parkhill J."/>
            <person name="Garnier T."/>
            <person name="Churcher C.M."/>
            <person name="Harris D.E."/>
            <person name="Gordon S.V."/>
            <person name="Eiglmeier K."/>
            <person name="Gas S."/>
            <person name="Barry C.E. III"/>
            <person name="Tekaia F."/>
            <person name="Badcock K."/>
            <person name="Basham D."/>
            <person name="Brown D."/>
            <person name="Chillingworth T."/>
            <person name="Connor R."/>
            <person name="Davies R.M."/>
            <person name="Devlin K."/>
            <person name="Feltwell T."/>
            <person name="Gentles S."/>
            <person name="Hamlin N."/>
            <person name="Holroyd S."/>
            <person name="Hornsby T."/>
            <person name="Jagels K."/>
            <person name="Krogh A."/>
            <person name="McLean J."/>
            <person name="Moule S."/>
            <person name="Murphy L.D."/>
            <person name="Oliver S."/>
            <person name="Osborne J."/>
            <person name="Quail M.A."/>
            <person name="Rajandream M.A."/>
            <person name="Rogers J."/>
            <person name="Rutter S."/>
            <person name="Seeger K."/>
            <person name="Skelton S."/>
            <person name="Squares S."/>
            <person name="Squares R."/>
            <person name="Sulston J.E."/>
            <person name="Taylor K."/>
            <person name="Whitehead S."/>
            <person name="Barrell B.G."/>
        </authorList>
    </citation>
    <scope>NUCLEOTIDE SEQUENCE [LARGE SCALE GENOMIC DNA]</scope>
    <source>
        <strain>ATCC 25618 / H37Rv</strain>
    </source>
</reference>
<reference key="2">
    <citation type="journal article" date="2006" name="Mol. Cell. Biochem.">
        <title>The phosphoenolpyruvate carboxykinase of Mycobacterium tuberculosis induces strong cell-mediated immune responses in mice.</title>
        <authorList>
            <person name="Liu K."/>
            <person name="Ba X."/>
            <person name="Yu J."/>
            <person name="Li J."/>
            <person name="Wei Q."/>
            <person name="Han G."/>
            <person name="Li G."/>
            <person name="Cui Y."/>
        </authorList>
    </citation>
    <scope>FUNCTION</scope>
</reference>
<reference key="3">
    <citation type="journal article" date="2010" name="Proc. Natl. Acad. Sci. U.S.A.">
        <title>Gluconeogenic carbon flow of tricarboxylic acid cycle intermediates is critical for Mycobacterium tuberculosis to establish and maintain infection.</title>
        <authorList>
            <person name="Marrero J."/>
            <person name="Rhee K.Y."/>
            <person name="Schnappinger D."/>
            <person name="Pethe K."/>
            <person name="Ehrt S."/>
        </authorList>
    </citation>
    <scope>FUNCTION</scope>
    <scope>DISRUPTION PHENOTYPE</scope>
</reference>
<reference key="4">
    <citation type="journal article" date="2011" name="Mol. Cell. Proteomics">
        <title>Proteogenomic analysis of Mycobacterium tuberculosis by high resolution mass spectrometry.</title>
        <authorList>
            <person name="Kelkar D.S."/>
            <person name="Kumar D."/>
            <person name="Kumar P."/>
            <person name="Balakrishnan L."/>
            <person name="Muthusamy B."/>
            <person name="Yadav A.K."/>
            <person name="Shrivastava P."/>
            <person name="Marimuthu A."/>
            <person name="Anand S."/>
            <person name="Sundaram H."/>
            <person name="Kingsbury R."/>
            <person name="Harsha H.C."/>
            <person name="Nair B."/>
            <person name="Prasad T.S."/>
            <person name="Chauhan D.S."/>
            <person name="Katoch K."/>
            <person name="Katoch V.M."/>
            <person name="Kumar P."/>
            <person name="Chaerkady R."/>
            <person name="Ramachandran S."/>
            <person name="Dash D."/>
            <person name="Pandey A."/>
        </authorList>
    </citation>
    <scope>ACETYLATION [LARGE SCALE ANALYSIS] AT THR-2</scope>
    <scope>CLEAVAGE OF INITIATOR METHIONINE [LARGE SCALE ANALYSIS]</scope>
    <scope>IDENTIFICATION BY MASS SPECTROMETRY [LARGE SCALE ANALYSIS]</scope>
    <source>
        <strain>ATCC 25618 / H37Rv</strain>
    </source>
</reference>
<keyword id="KW-0002">3D-structure</keyword>
<keyword id="KW-0007">Acetylation</keyword>
<keyword id="KW-0963">Cytoplasm</keyword>
<keyword id="KW-0210">Decarboxylase</keyword>
<keyword id="KW-0312">Gluconeogenesis</keyword>
<keyword id="KW-0342">GTP-binding</keyword>
<keyword id="KW-0456">Lyase</keyword>
<keyword id="KW-0464">Manganese</keyword>
<keyword id="KW-0479">Metal-binding</keyword>
<keyword id="KW-0547">Nucleotide-binding</keyword>
<keyword id="KW-1185">Reference proteome</keyword>
<proteinExistence type="evidence at protein level"/>
<organism>
    <name type="scientific">Mycobacterium tuberculosis (strain ATCC 25618 / H37Rv)</name>
    <dbReference type="NCBI Taxonomy" id="83332"/>
    <lineage>
        <taxon>Bacteria</taxon>
        <taxon>Bacillati</taxon>
        <taxon>Actinomycetota</taxon>
        <taxon>Actinomycetes</taxon>
        <taxon>Mycobacteriales</taxon>
        <taxon>Mycobacteriaceae</taxon>
        <taxon>Mycobacterium</taxon>
        <taxon>Mycobacterium tuberculosis complex</taxon>
    </lineage>
</organism>
<gene>
    <name evidence="1" type="primary">pckG</name>
    <name type="synonym">pck1</name>
    <name type="synonym">pckA</name>
    <name type="ordered locus">Rv0211</name>
    <name type="ORF">MTCY08D5.06</name>
</gene>
<comment type="function">
    <text evidence="2 3">Involved in the gluconeogenesis, in growth on fatty acids and is important for initiation of infection in the macrophages. Catalyzes the GTP-dependent conversion of oxaloacetate (OAA) to phosphoenolpyruvate (PEP), the rate-limiting step in the metabolic pathway that produces glucose from lactate and other precursors derived from the citric acid cycle.</text>
</comment>
<comment type="catalytic activity">
    <reaction evidence="1">
        <text>oxaloacetate + GTP = phosphoenolpyruvate + GDP + CO2</text>
        <dbReference type="Rhea" id="RHEA:10388"/>
        <dbReference type="ChEBI" id="CHEBI:16452"/>
        <dbReference type="ChEBI" id="CHEBI:16526"/>
        <dbReference type="ChEBI" id="CHEBI:37565"/>
        <dbReference type="ChEBI" id="CHEBI:58189"/>
        <dbReference type="ChEBI" id="CHEBI:58702"/>
        <dbReference type="EC" id="4.1.1.32"/>
    </reaction>
</comment>
<comment type="cofactor">
    <cofactor evidence="1">
        <name>Mn(2+)</name>
        <dbReference type="ChEBI" id="CHEBI:29035"/>
    </cofactor>
    <text evidence="1">Binds 1 Mn(2+) ion per subunit.</text>
</comment>
<comment type="pathway">
    <text evidence="1">Carbohydrate biosynthesis; gluconeogenesis.</text>
</comment>
<comment type="subunit">
    <text evidence="1">Monomer.</text>
</comment>
<comment type="subcellular location">
    <subcellularLocation>
        <location evidence="1">Cytoplasm</location>
    </subcellularLocation>
</comment>
<comment type="disruption phenotype">
    <text evidence="3">Cells lacking this gene are unable to grow in the absence of an external carbon source when grown with fatty acids acetate, valerate, or butyrate as the sole carbon source. This mutant also fails to replicate in mouse lungs. PEPCK depletion during the chronic phase of infection results in mycobacterial clearance.</text>
</comment>
<comment type="miscellaneous">
    <text evidence="2">The number of CD4 T-cells is increased in the PEPCK immunized mice although the change of the number of CD8 T-cells is not significant. The cytokines IFN-gamma (IFNG), IL-12 (IL12A or IL12B) and TNF-alpha (TNF) are increased significantly in the mice immunized with PEPCK relative to those immunized with incomplete adjuvant.</text>
</comment>
<comment type="similarity">
    <text evidence="1">Belongs to the phosphoenolpyruvate carboxykinase [GTP] family.</text>
</comment>
<dbReference type="EC" id="4.1.1.32" evidence="1"/>
<dbReference type="EMBL" id="AL123456">
    <property type="protein sequence ID" value="CCP42939.1"/>
    <property type="molecule type" value="Genomic_DNA"/>
</dbReference>
<dbReference type="PIR" id="A70960">
    <property type="entry name" value="A70960"/>
</dbReference>
<dbReference type="RefSeq" id="NP_214725.1">
    <property type="nucleotide sequence ID" value="NC_000962.3"/>
</dbReference>
<dbReference type="RefSeq" id="WP_003401212.1">
    <property type="nucleotide sequence ID" value="NZ_NVQJ01000001.1"/>
</dbReference>
<dbReference type="PDB" id="4R43">
    <property type="method" value="X-ray"/>
    <property type="resolution" value="1.80 A"/>
    <property type="chains" value="A=1-606"/>
</dbReference>
<dbReference type="PDB" id="4RCG">
    <property type="method" value="X-ray"/>
    <property type="resolution" value="2.60 A"/>
    <property type="chains" value="A=1-606"/>
</dbReference>
<dbReference type="PDBsum" id="4R43"/>
<dbReference type="PDBsum" id="4RCG"/>
<dbReference type="SMR" id="P9WIH3"/>
<dbReference type="FunCoup" id="P9WIH3">
    <property type="interactions" value="102"/>
</dbReference>
<dbReference type="STRING" id="83332.Rv0211"/>
<dbReference type="iPTMnet" id="P9WIH3"/>
<dbReference type="PaxDb" id="83332-Rv0211"/>
<dbReference type="DNASU" id="886744"/>
<dbReference type="GeneID" id="886744"/>
<dbReference type="KEGG" id="mtu:Rv0211"/>
<dbReference type="KEGG" id="mtv:RVBD_0211"/>
<dbReference type="TubercuList" id="Rv0211"/>
<dbReference type="eggNOG" id="COG1274">
    <property type="taxonomic scope" value="Bacteria"/>
</dbReference>
<dbReference type="InParanoid" id="P9WIH3"/>
<dbReference type="OrthoDB" id="9758871at2"/>
<dbReference type="PhylomeDB" id="P9WIH3"/>
<dbReference type="UniPathway" id="UPA00138"/>
<dbReference type="EvolutionaryTrace" id="P9WIH3"/>
<dbReference type="Proteomes" id="UP000001584">
    <property type="component" value="Chromosome"/>
</dbReference>
<dbReference type="GO" id="GO:0005829">
    <property type="term" value="C:cytosol"/>
    <property type="evidence" value="ECO:0007005"/>
    <property type="project" value="MTBBASE"/>
</dbReference>
<dbReference type="GO" id="GO:0005576">
    <property type="term" value="C:extracellular region"/>
    <property type="evidence" value="ECO:0007005"/>
    <property type="project" value="MTBBASE"/>
</dbReference>
<dbReference type="GO" id="GO:0009274">
    <property type="term" value="C:peptidoglycan-based cell wall"/>
    <property type="evidence" value="ECO:0007005"/>
    <property type="project" value="MTBBASE"/>
</dbReference>
<dbReference type="GO" id="GO:0005886">
    <property type="term" value="C:plasma membrane"/>
    <property type="evidence" value="ECO:0007005"/>
    <property type="project" value="MTBBASE"/>
</dbReference>
<dbReference type="GO" id="GO:0005525">
    <property type="term" value="F:GTP binding"/>
    <property type="evidence" value="ECO:0007669"/>
    <property type="project" value="UniProtKB-UniRule"/>
</dbReference>
<dbReference type="GO" id="GO:0030145">
    <property type="term" value="F:manganese ion binding"/>
    <property type="evidence" value="ECO:0000318"/>
    <property type="project" value="GO_Central"/>
</dbReference>
<dbReference type="GO" id="GO:0004613">
    <property type="term" value="F:phosphoenolpyruvate carboxykinase (GTP) activity"/>
    <property type="evidence" value="ECO:0000318"/>
    <property type="project" value="GO_Central"/>
</dbReference>
<dbReference type="GO" id="GO:0071333">
    <property type="term" value="P:cellular response to glucose stimulus"/>
    <property type="evidence" value="ECO:0000318"/>
    <property type="project" value="GO_Central"/>
</dbReference>
<dbReference type="GO" id="GO:0010106">
    <property type="term" value="P:cellular response to iron ion starvation"/>
    <property type="evidence" value="ECO:0000270"/>
    <property type="project" value="MTBBASE"/>
</dbReference>
<dbReference type="GO" id="GO:0006094">
    <property type="term" value="P:gluconeogenesis"/>
    <property type="evidence" value="ECO:0000318"/>
    <property type="project" value="GO_Central"/>
</dbReference>
<dbReference type="GO" id="GO:0046327">
    <property type="term" value="P:glycerol biosynthetic process from pyruvate"/>
    <property type="evidence" value="ECO:0000318"/>
    <property type="project" value="GO_Central"/>
</dbReference>
<dbReference type="GO" id="GO:0006107">
    <property type="term" value="P:oxaloacetate metabolic process"/>
    <property type="evidence" value="ECO:0000318"/>
    <property type="project" value="GO_Central"/>
</dbReference>
<dbReference type="GO" id="GO:0019543">
    <property type="term" value="P:propionate catabolic process"/>
    <property type="evidence" value="ECO:0000318"/>
    <property type="project" value="GO_Central"/>
</dbReference>
<dbReference type="GO" id="GO:0033993">
    <property type="term" value="P:response to lipid"/>
    <property type="evidence" value="ECO:0000318"/>
    <property type="project" value="GO_Central"/>
</dbReference>
<dbReference type="GO" id="GO:0042594">
    <property type="term" value="P:response to starvation"/>
    <property type="evidence" value="ECO:0000318"/>
    <property type="project" value="GO_Central"/>
</dbReference>
<dbReference type="CDD" id="cd00819">
    <property type="entry name" value="PEPCK_GTP"/>
    <property type="match status" value="1"/>
</dbReference>
<dbReference type="FunFam" id="3.40.449.10:FF:000005">
    <property type="entry name" value="Phosphoenolpyruvate carboxykinase [GTP]"/>
    <property type="match status" value="1"/>
</dbReference>
<dbReference type="Gene3D" id="3.90.228.20">
    <property type="match status" value="1"/>
</dbReference>
<dbReference type="Gene3D" id="3.40.449.10">
    <property type="entry name" value="Phosphoenolpyruvate Carboxykinase, domain 1"/>
    <property type="match status" value="1"/>
</dbReference>
<dbReference type="Gene3D" id="2.170.8.10">
    <property type="entry name" value="Phosphoenolpyruvate Carboxykinase, domain 2"/>
    <property type="match status" value="1"/>
</dbReference>
<dbReference type="HAMAP" id="MF_00452">
    <property type="entry name" value="PEPCK_GTP"/>
    <property type="match status" value="1"/>
</dbReference>
<dbReference type="InterPro" id="IPR018091">
    <property type="entry name" value="PEP_carboxykin_GTP_CS"/>
</dbReference>
<dbReference type="InterPro" id="IPR013035">
    <property type="entry name" value="PEP_carboxykinase_C"/>
</dbReference>
<dbReference type="InterPro" id="IPR008209">
    <property type="entry name" value="PEP_carboxykinase_GTP"/>
</dbReference>
<dbReference type="InterPro" id="IPR035077">
    <property type="entry name" value="PEP_carboxykinase_GTP_C"/>
</dbReference>
<dbReference type="InterPro" id="IPR035078">
    <property type="entry name" value="PEP_carboxykinase_GTP_N"/>
</dbReference>
<dbReference type="InterPro" id="IPR008210">
    <property type="entry name" value="PEP_carboxykinase_N"/>
</dbReference>
<dbReference type="NCBIfam" id="NF003253">
    <property type="entry name" value="PRK04210.1"/>
    <property type="match status" value="1"/>
</dbReference>
<dbReference type="PANTHER" id="PTHR11561">
    <property type="entry name" value="PHOSPHOENOLPYRUVATE CARBOXYKINASE"/>
    <property type="match status" value="1"/>
</dbReference>
<dbReference type="PANTHER" id="PTHR11561:SF0">
    <property type="entry name" value="PHOSPHOENOLPYRUVATE CARBOXYKINASE [GTP]-RELATED"/>
    <property type="match status" value="1"/>
</dbReference>
<dbReference type="Pfam" id="PF00821">
    <property type="entry name" value="PEPCK_GTP"/>
    <property type="match status" value="1"/>
</dbReference>
<dbReference type="Pfam" id="PF17297">
    <property type="entry name" value="PEPCK_N"/>
    <property type="match status" value="1"/>
</dbReference>
<dbReference type="PIRSF" id="PIRSF001348">
    <property type="entry name" value="PEP_carboxykinase_GTP"/>
    <property type="match status" value="1"/>
</dbReference>
<dbReference type="SUPFAM" id="SSF68923">
    <property type="entry name" value="PEP carboxykinase N-terminal domain"/>
    <property type="match status" value="1"/>
</dbReference>
<dbReference type="SUPFAM" id="SSF53795">
    <property type="entry name" value="PEP carboxykinase-like"/>
    <property type="match status" value="1"/>
</dbReference>
<dbReference type="PROSITE" id="PS00505">
    <property type="entry name" value="PEPCK_GTP"/>
    <property type="match status" value="1"/>
</dbReference>
<evidence type="ECO:0000255" key="1">
    <source>
        <dbReference type="HAMAP-Rule" id="MF_00452"/>
    </source>
</evidence>
<evidence type="ECO:0000269" key="2">
    <source>
    </source>
</evidence>
<evidence type="ECO:0000269" key="3">
    <source>
    </source>
</evidence>
<evidence type="ECO:0000303" key="4">
    <source>
    </source>
</evidence>
<evidence type="ECO:0007744" key="5">
    <source>
    </source>
</evidence>
<evidence type="ECO:0007829" key="6">
    <source>
        <dbReference type="PDB" id="4R43"/>
    </source>
</evidence>
<evidence type="ECO:0007829" key="7">
    <source>
        <dbReference type="PDB" id="4RCG"/>
    </source>
</evidence>
<feature type="initiator methionine" description="Removed" evidence="5">
    <location>
        <position position="1"/>
    </location>
</feature>
<feature type="chain" id="PRO_0000103611" description="Phosphoenolpyruvate carboxykinase [GTP]">
    <location>
        <begin position="2"/>
        <end position="606"/>
    </location>
</feature>
<feature type="active site" evidence="1">
    <location>
        <position position="273"/>
    </location>
</feature>
<feature type="binding site" evidence="1">
    <location>
        <position position="81"/>
    </location>
    <ligand>
        <name>substrate</name>
    </ligand>
</feature>
<feature type="binding site" evidence="1">
    <location>
        <begin position="220"/>
        <end position="222"/>
    </location>
    <ligand>
        <name>substrate</name>
    </ligand>
</feature>
<feature type="binding site" evidence="1">
    <location>
        <position position="229"/>
    </location>
    <ligand>
        <name>Mn(2+)</name>
        <dbReference type="ChEBI" id="CHEBI:29035"/>
    </ligand>
</feature>
<feature type="binding site" evidence="1">
    <location>
        <position position="249"/>
    </location>
    <ligand>
        <name>Mn(2+)</name>
        <dbReference type="ChEBI" id="CHEBI:29035"/>
    </ligand>
</feature>
<feature type="binding site" evidence="1">
    <location>
        <position position="271"/>
    </location>
    <ligand>
        <name>substrate</name>
    </ligand>
</feature>
<feature type="binding site" evidence="1">
    <location>
        <begin position="272"/>
        <end position="277"/>
    </location>
    <ligand>
        <name>GTP</name>
        <dbReference type="ChEBI" id="CHEBI:37565"/>
    </ligand>
</feature>
<feature type="binding site" evidence="1">
    <location>
        <position position="296"/>
    </location>
    <ligand>
        <name>Mn(2+)</name>
        <dbReference type="ChEBI" id="CHEBI:29035"/>
    </ligand>
</feature>
<feature type="binding site" evidence="1">
    <location>
        <begin position="387"/>
        <end position="389"/>
    </location>
    <ligand>
        <name>substrate</name>
    </ligand>
</feature>
<feature type="binding site" evidence="1">
    <location>
        <position position="389"/>
    </location>
    <ligand>
        <name>GTP</name>
        <dbReference type="ChEBI" id="CHEBI:37565"/>
    </ligand>
</feature>
<feature type="binding site" evidence="1">
    <location>
        <position position="420"/>
    </location>
    <ligand>
        <name>GTP</name>
        <dbReference type="ChEBI" id="CHEBI:37565"/>
    </ligand>
</feature>
<feature type="binding site" evidence="1">
    <location>
        <begin position="515"/>
        <end position="518"/>
    </location>
    <ligand>
        <name>GTP</name>
        <dbReference type="ChEBI" id="CHEBI:37565"/>
    </ligand>
</feature>
<feature type="modified residue" description="N-acetylthreonine" evidence="5">
    <location>
        <position position="2"/>
    </location>
</feature>
<feature type="turn" evidence="6">
    <location>
        <begin position="7"/>
        <end position="11"/>
    </location>
</feature>
<feature type="helix" evidence="6">
    <location>
        <begin position="17"/>
        <end position="30"/>
    </location>
</feature>
<feature type="strand" evidence="6">
    <location>
        <begin position="33"/>
        <end position="37"/>
    </location>
</feature>
<feature type="helix" evidence="6">
    <location>
        <begin position="42"/>
        <end position="54"/>
    </location>
</feature>
<feature type="strand" evidence="6">
    <location>
        <begin position="57"/>
        <end position="60"/>
    </location>
</feature>
<feature type="turn" evidence="6">
    <location>
        <begin position="63"/>
        <end position="65"/>
    </location>
</feature>
<feature type="strand" evidence="6">
    <location>
        <begin position="66"/>
        <end position="68"/>
    </location>
</feature>
<feature type="strand" evidence="6">
    <location>
        <begin position="70"/>
        <end position="72"/>
    </location>
</feature>
<feature type="helix" evidence="6">
    <location>
        <begin position="83"/>
        <end position="85"/>
    </location>
</feature>
<feature type="strand" evidence="6">
    <location>
        <begin position="86"/>
        <end position="88"/>
    </location>
</feature>
<feature type="helix" evidence="6">
    <location>
        <begin position="93"/>
        <end position="95"/>
    </location>
</feature>
<feature type="helix" evidence="6">
    <location>
        <begin position="105"/>
        <end position="116"/>
    </location>
</feature>
<feature type="turn" evidence="6">
    <location>
        <begin position="117"/>
        <end position="122"/>
    </location>
</feature>
<feature type="strand" evidence="6">
    <location>
        <begin position="123"/>
        <end position="133"/>
    </location>
</feature>
<feature type="strand" evidence="6">
    <location>
        <begin position="137"/>
        <end position="139"/>
    </location>
</feature>
<feature type="strand" evidence="6">
    <location>
        <begin position="141"/>
        <end position="148"/>
    </location>
</feature>
<feature type="helix" evidence="6">
    <location>
        <begin position="150"/>
        <end position="159"/>
    </location>
</feature>
<feature type="strand" evidence="6">
    <location>
        <begin position="160"/>
        <end position="163"/>
    </location>
</feature>
<feature type="helix" evidence="6">
    <location>
        <begin position="164"/>
        <end position="170"/>
    </location>
</feature>
<feature type="turn" evidence="6">
    <location>
        <begin position="171"/>
        <end position="173"/>
    </location>
</feature>
<feature type="strand" evidence="6">
    <location>
        <begin position="177"/>
        <end position="182"/>
    </location>
</feature>
<feature type="strand" evidence="6">
    <location>
        <begin position="203"/>
        <end position="207"/>
    </location>
</feature>
<feature type="turn" evidence="6">
    <location>
        <begin position="208"/>
        <end position="211"/>
    </location>
</feature>
<feature type="strand" evidence="6">
    <location>
        <begin position="212"/>
        <end position="217"/>
    </location>
</feature>
<feature type="helix" evidence="6">
    <location>
        <begin position="221"/>
        <end position="223"/>
    </location>
</feature>
<feature type="helix" evidence="6">
    <location>
        <begin position="227"/>
        <end position="233"/>
    </location>
</feature>
<feature type="helix" evidence="6">
    <location>
        <begin position="234"/>
        <end position="243"/>
    </location>
</feature>
<feature type="strand" evidence="6">
    <location>
        <begin position="246"/>
        <end position="249"/>
    </location>
</feature>
<feature type="strand" evidence="6">
    <location>
        <begin position="251"/>
        <end position="256"/>
    </location>
</feature>
<feature type="strand" evidence="6">
    <location>
        <begin position="258"/>
        <end position="260"/>
    </location>
</feature>
<feature type="strand" evidence="6">
    <location>
        <begin position="262"/>
        <end position="268"/>
    </location>
</feature>
<feature type="helix" evidence="6">
    <location>
        <begin position="275"/>
        <end position="279"/>
    </location>
</feature>
<feature type="strand" evidence="6">
    <location>
        <begin position="289"/>
        <end position="296"/>
    </location>
</feature>
<feature type="strand" evidence="6">
    <location>
        <begin position="298"/>
        <end position="302"/>
    </location>
</feature>
<feature type="strand" evidence="7">
    <location>
        <begin position="304"/>
        <end position="306"/>
    </location>
</feature>
<feature type="strand" evidence="6">
    <location>
        <begin position="308"/>
        <end position="311"/>
    </location>
</feature>
<feature type="strand" evidence="6">
    <location>
        <begin position="315"/>
        <end position="320"/>
    </location>
</feature>
<feature type="turn" evidence="6">
    <location>
        <begin position="326"/>
        <end position="328"/>
    </location>
</feature>
<feature type="helix" evidence="6">
    <location>
        <begin position="330"/>
        <end position="337"/>
    </location>
</feature>
<feature type="strand" evidence="6">
    <location>
        <begin position="342"/>
        <end position="345"/>
    </location>
</feature>
<feature type="strand" evidence="7">
    <location>
        <begin position="347"/>
        <end position="349"/>
    </location>
</feature>
<feature type="strand" evidence="6">
    <location>
        <begin position="359"/>
        <end position="361"/>
    </location>
</feature>
<feature type="strand" evidence="6">
    <location>
        <begin position="364"/>
        <end position="367"/>
    </location>
</feature>
<feature type="strand" evidence="6">
    <location>
        <begin position="373"/>
        <end position="375"/>
    </location>
</feature>
<feature type="turn" evidence="6">
    <location>
        <begin position="376"/>
        <end position="378"/>
    </location>
</feature>
<feature type="strand" evidence="6">
    <location>
        <begin position="389"/>
        <end position="393"/>
    </location>
</feature>
<feature type="helix" evidence="6">
    <location>
        <begin position="394"/>
        <end position="396"/>
    </location>
</feature>
<feature type="helix" evidence="6">
    <location>
        <begin position="402"/>
        <end position="405"/>
    </location>
</feature>
<feature type="strand" evidence="6">
    <location>
        <begin position="410"/>
        <end position="418"/>
    </location>
</feature>
<feature type="strand" evidence="6">
    <location>
        <begin position="422"/>
        <end position="425"/>
    </location>
</feature>
<feature type="strand" evidence="6">
    <location>
        <begin position="427"/>
        <end position="430"/>
    </location>
</feature>
<feature type="helix" evidence="6">
    <location>
        <begin position="434"/>
        <end position="442"/>
    </location>
</feature>
<feature type="turn" evidence="6">
    <location>
        <begin position="451"/>
        <end position="453"/>
    </location>
</feature>
<feature type="helix" evidence="6">
    <location>
        <begin position="463"/>
        <end position="465"/>
    </location>
</feature>
<feature type="turn" evidence="6">
    <location>
        <begin position="467"/>
        <end position="469"/>
    </location>
</feature>
<feature type="helix" evidence="6">
    <location>
        <begin position="474"/>
        <end position="486"/>
    </location>
</feature>
<feature type="helix" evidence="6">
    <location>
        <begin position="490"/>
        <end position="492"/>
    </location>
</feature>
<feature type="strand" evidence="6">
    <location>
        <begin position="495"/>
        <end position="499"/>
    </location>
</feature>
<feature type="strand" evidence="6">
    <location>
        <begin position="510"/>
        <end position="512"/>
    </location>
</feature>
<feature type="helix" evidence="6">
    <location>
        <begin position="515"/>
        <end position="518"/>
    </location>
</feature>
<feature type="helix" evidence="6">
    <location>
        <begin position="519"/>
        <end position="529"/>
    </location>
</feature>
<feature type="strand" evidence="6">
    <location>
        <begin position="536"/>
        <end position="538"/>
    </location>
</feature>
<feature type="strand" evidence="6">
    <location>
        <begin position="541"/>
        <end position="543"/>
    </location>
</feature>
<feature type="helix" evidence="6">
    <location>
        <begin position="546"/>
        <end position="548"/>
    </location>
</feature>
<feature type="helix" evidence="6">
    <location>
        <begin position="558"/>
        <end position="565"/>
    </location>
</feature>
<feature type="helix" evidence="6">
    <location>
        <begin position="569"/>
        <end position="586"/>
    </location>
</feature>
<feature type="helix" evidence="6">
    <location>
        <begin position="587"/>
        <end position="589"/>
    </location>
</feature>
<feature type="helix" evidence="6">
    <location>
        <begin position="592"/>
        <end position="605"/>
    </location>
</feature>